<sequence length="409" mass="46694">MSTHPIRVFSEIGKLKKVMLHRPGKELENLQPDYLERLLFDDIPFLEDAQKEHDNFAQALRNEGVEVLYLEQLAAESLTSPEIREQFIEEYLEEANIRGRETKKAIRELLRGIKDNRELVEKTMAGVQKVELPEIPEEAKGLTDLVESDYPFAIDPMPNLYFTRDPFATIGNAVSLNHMYADTRNRETLYGKYIFKHHPVYGGKVDLVYNREEDTRIEGGDELVLSKDVLAVGISQRTDAASIEKLLVNIFKKNVGFKKVLAFEFANNRKFMHLDTVFTMVDYDKFTIHPEIEGDLRVYSVTYVDDKLKIVEEKGDLAEILAENLGVEKVHLIRCGGGNIVAAAREQWNDGSNTLTIAPGVVVVYDRNTVTNKILEEYGLRLIKIRGSELVRGRGGPRCMSMPFEREEI</sequence>
<dbReference type="EC" id="3.5.3.6" evidence="1"/>
<dbReference type="EMBL" id="CP000387">
    <property type="protein sequence ID" value="ABN44171.1"/>
    <property type="molecule type" value="Genomic_DNA"/>
</dbReference>
<dbReference type="RefSeq" id="WP_011836692.1">
    <property type="nucleotide sequence ID" value="NC_009009.1"/>
</dbReference>
<dbReference type="RefSeq" id="YP_001034721.1">
    <property type="nucleotide sequence ID" value="NC_009009.1"/>
</dbReference>
<dbReference type="SMR" id="A3CLW6"/>
<dbReference type="STRING" id="388919.SSA_0737"/>
<dbReference type="KEGG" id="ssa:SSA_0737"/>
<dbReference type="PATRIC" id="fig|388919.9.peg.707"/>
<dbReference type="eggNOG" id="COG2235">
    <property type="taxonomic scope" value="Bacteria"/>
</dbReference>
<dbReference type="HOGENOM" id="CLU_052662_0_1_9"/>
<dbReference type="OrthoDB" id="9807502at2"/>
<dbReference type="UniPathway" id="UPA00254">
    <property type="reaction ID" value="UER00364"/>
</dbReference>
<dbReference type="Proteomes" id="UP000002148">
    <property type="component" value="Chromosome"/>
</dbReference>
<dbReference type="GO" id="GO:0005737">
    <property type="term" value="C:cytoplasm"/>
    <property type="evidence" value="ECO:0007669"/>
    <property type="project" value="UniProtKB-SubCell"/>
</dbReference>
<dbReference type="GO" id="GO:0016990">
    <property type="term" value="F:arginine deiminase activity"/>
    <property type="evidence" value="ECO:0007669"/>
    <property type="project" value="UniProtKB-UniRule"/>
</dbReference>
<dbReference type="GO" id="GO:0019547">
    <property type="term" value="P:arginine catabolic process to ornithine"/>
    <property type="evidence" value="ECO:0007669"/>
    <property type="project" value="UniProtKB-UniRule"/>
</dbReference>
<dbReference type="GO" id="GO:0019546">
    <property type="term" value="P:arginine deiminase pathway"/>
    <property type="evidence" value="ECO:0007669"/>
    <property type="project" value="TreeGrafter"/>
</dbReference>
<dbReference type="Gene3D" id="1.10.3930.10">
    <property type="entry name" value="Arginine deiminase"/>
    <property type="match status" value="1"/>
</dbReference>
<dbReference type="Gene3D" id="3.75.10.10">
    <property type="entry name" value="L-arginine/glycine Amidinotransferase, Chain A"/>
    <property type="match status" value="1"/>
</dbReference>
<dbReference type="HAMAP" id="MF_00242">
    <property type="entry name" value="Arg_deiminase"/>
    <property type="match status" value="1"/>
</dbReference>
<dbReference type="InterPro" id="IPR003876">
    <property type="entry name" value="Arg_deiminase"/>
</dbReference>
<dbReference type="NCBIfam" id="TIGR01078">
    <property type="entry name" value="arcA"/>
    <property type="match status" value="1"/>
</dbReference>
<dbReference type="NCBIfam" id="NF002381">
    <property type="entry name" value="PRK01388.1"/>
    <property type="match status" value="1"/>
</dbReference>
<dbReference type="PANTHER" id="PTHR47271">
    <property type="entry name" value="ARGININE DEIMINASE"/>
    <property type="match status" value="1"/>
</dbReference>
<dbReference type="PANTHER" id="PTHR47271:SF2">
    <property type="entry name" value="ARGININE DEIMINASE"/>
    <property type="match status" value="1"/>
</dbReference>
<dbReference type="Pfam" id="PF02274">
    <property type="entry name" value="ADI"/>
    <property type="match status" value="1"/>
</dbReference>
<dbReference type="PIRSF" id="PIRSF006356">
    <property type="entry name" value="Arg_deiminase"/>
    <property type="match status" value="1"/>
</dbReference>
<dbReference type="PRINTS" id="PR01466">
    <property type="entry name" value="ARGDEIMINASE"/>
</dbReference>
<dbReference type="SUPFAM" id="SSF55909">
    <property type="entry name" value="Pentein"/>
    <property type="match status" value="1"/>
</dbReference>
<reference key="1">
    <citation type="journal article" date="2007" name="J. Bacteriol.">
        <title>Genome of the opportunistic pathogen Streptococcus sanguinis.</title>
        <authorList>
            <person name="Xu P."/>
            <person name="Alves J.M."/>
            <person name="Kitten T."/>
            <person name="Brown A."/>
            <person name="Chen Z."/>
            <person name="Ozaki L.S."/>
            <person name="Manque P."/>
            <person name="Ge X."/>
            <person name="Serrano M.G."/>
            <person name="Puiu D."/>
            <person name="Hendricks S."/>
            <person name="Wang Y."/>
            <person name="Chaplin M.D."/>
            <person name="Akan D."/>
            <person name="Paik S."/>
            <person name="Peterson D.L."/>
            <person name="Macrina F.L."/>
            <person name="Buck G.A."/>
        </authorList>
    </citation>
    <scope>NUCLEOTIDE SEQUENCE [LARGE SCALE GENOMIC DNA]</scope>
    <source>
        <strain>SK36</strain>
    </source>
</reference>
<proteinExistence type="inferred from homology"/>
<protein>
    <recommendedName>
        <fullName evidence="1">Arginine deiminase</fullName>
        <shortName evidence="1">ADI</shortName>
        <ecNumber evidence="1">3.5.3.6</ecNumber>
    </recommendedName>
    <alternativeName>
        <fullName evidence="1">Arginine dihydrolase</fullName>
        <shortName evidence="1">AD</shortName>
    </alternativeName>
</protein>
<name>ARCA_STRSV</name>
<accession>A3CLW6</accession>
<feature type="chain" id="PRO_1000005730" description="Arginine deiminase">
    <location>
        <begin position="1"/>
        <end position="409"/>
    </location>
</feature>
<feature type="active site" description="Amidino-cysteine intermediate" evidence="1">
    <location>
        <position position="399"/>
    </location>
</feature>
<comment type="catalytic activity">
    <reaction evidence="1">
        <text>L-arginine + H2O = L-citrulline + NH4(+)</text>
        <dbReference type="Rhea" id="RHEA:19597"/>
        <dbReference type="ChEBI" id="CHEBI:15377"/>
        <dbReference type="ChEBI" id="CHEBI:28938"/>
        <dbReference type="ChEBI" id="CHEBI:32682"/>
        <dbReference type="ChEBI" id="CHEBI:57743"/>
        <dbReference type="EC" id="3.5.3.6"/>
    </reaction>
</comment>
<comment type="pathway">
    <text evidence="1">Amino-acid degradation; L-arginine degradation via ADI pathway; carbamoyl phosphate from L-arginine: step 1/2.</text>
</comment>
<comment type="subcellular location">
    <subcellularLocation>
        <location evidence="1">Cytoplasm</location>
    </subcellularLocation>
</comment>
<comment type="similarity">
    <text evidence="1">Belongs to the arginine deiminase family.</text>
</comment>
<evidence type="ECO:0000255" key="1">
    <source>
        <dbReference type="HAMAP-Rule" id="MF_00242"/>
    </source>
</evidence>
<keyword id="KW-0056">Arginine metabolism</keyword>
<keyword id="KW-0963">Cytoplasm</keyword>
<keyword id="KW-0378">Hydrolase</keyword>
<keyword id="KW-1185">Reference proteome</keyword>
<gene>
    <name evidence="1" type="primary">arcA</name>
    <name type="ordered locus">SSA_0737</name>
</gene>
<organism>
    <name type="scientific">Streptococcus sanguinis (strain SK36)</name>
    <dbReference type="NCBI Taxonomy" id="388919"/>
    <lineage>
        <taxon>Bacteria</taxon>
        <taxon>Bacillati</taxon>
        <taxon>Bacillota</taxon>
        <taxon>Bacilli</taxon>
        <taxon>Lactobacillales</taxon>
        <taxon>Streptococcaceae</taxon>
        <taxon>Streptococcus</taxon>
    </lineage>
</organism>